<comment type="catalytic activity">
    <reaction>
        <text>D-threo-isocitrate + NAD(+) = 2-oxoglutarate + CO2 + NADH</text>
        <dbReference type="Rhea" id="RHEA:23632"/>
        <dbReference type="ChEBI" id="CHEBI:15562"/>
        <dbReference type="ChEBI" id="CHEBI:16526"/>
        <dbReference type="ChEBI" id="CHEBI:16810"/>
        <dbReference type="ChEBI" id="CHEBI:57540"/>
        <dbReference type="ChEBI" id="CHEBI:57945"/>
        <dbReference type="EC" id="1.1.1.41"/>
    </reaction>
</comment>
<comment type="cofactor">
    <cofactor evidence="1">
        <name>Mg(2+)</name>
        <dbReference type="ChEBI" id="CHEBI:18420"/>
    </cofactor>
    <cofactor evidence="1">
        <name>Mn(2+)</name>
        <dbReference type="ChEBI" id="CHEBI:29035"/>
    </cofactor>
    <text evidence="1">Binds 1 Mg(2+) or Mn(2+) ion per subunit.</text>
</comment>
<comment type="subunit">
    <text evidence="1">Heterooligomer of subunits alpha, beta, and gamma in the apparent ratio of 2:1:1.</text>
</comment>
<comment type="subcellular location">
    <subcellularLocation>
        <location evidence="1">Mitochondrion</location>
    </subcellularLocation>
</comment>
<comment type="disruption phenotype">
    <text evidence="4">RNAi-mediated knockdown causes accumulation of citrate, leading to induction of the citrate-induced mitochondrial unfolded protein response (mtUPR).</text>
</comment>
<comment type="similarity">
    <text evidence="5">Belongs to the isocitrate and isopropylmalate dehydrogenases family.</text>
</comment>
<protein>
    <recommendedName>
        <fullName>Probable isocitrate dehydrogenase [NAD] subunit alpha, mitochondrial</fullName>
        <ecNumber>1.1.1.41</ecNumber>
    </recommendedName>
    <alternativeName>
        <fullName>Isocitric dehydrogenase subunit alpha</fullName>
    </alternativeName>
    <alternativeName>
        <fullName>NAD(+)-specific ICDH subunit alpha</fullName>
    </alternativeName>
</protein>
<dbReference type="EC" id="1.1.1.41"/>
<dbReference type="EMBL" id="Z79755">
    <property type="protein sequence ID" value="CAB02111.2"/>
    <property type="molecule type" value="Genomic_DNA"/>
</dbReference>
<dbReference type="PIR" id="T22149">
    <property type="entry name" value="T22149"/>
</dbReference>
<dbReference type="RefSeq" id="NP_492330.2">
    <property type="nucleotide sequence ID" value="NM_059929.6"/>
</dbReference>
<dbReference type="SMR" id="Q93714"/>
<dbReference type="BioGRID" id="38088">
    <property type="interactions" value="31"/>
</dbReference>
<dbReference type="FunCoup" id="Q93714">
    <property type="interactions" value="2308"/>
</dbReference>
<dbReference type="IntAct" id="Q93714">
    <property type="interactions" value="2"/>
</dbReference>
<dbReference type="STRING" id="6239.F43G9.1.2"/>
<dbReference type="iPTMnet" id="Q93714"/>
<dbReference type="PaxDb" id="6239-F43G9.1"/>
<dbReference type="PeptideAtlas" id="Q93714"/>
<dbReference type="EnsemblMetazoa" id="F43G9.1.1">
    <property type="protein sequence ID" value="F43G9.1.1"/>
    <property type="gene ID" value="WBGene00009664"/>
</dbReference>
<dbReference type="GeneID" id="172655"/>
<dbReference type="KEGG" id="cel:CELE_F43G9.1"/>
<dbReference type="UCSC" id="F43G9.1.1">
    <property type="organism name" value="c. elegans"/>
</dbReference>
<dbReference type="AGR" id="WB:WBGene00009664"/>
<dbReference type="CTD" id="172655"/>
<dbReference type="WormBase" id="F43G9.1">
    <property type="protein sequence ID" value="CE34018"/>
    <property type="gene ID" value="WBGene00009664"/>
    <property type="gene designation" value="idha-1"/>
</dbReference>
<dbReference type="eggNOG" id="KOG0785">
    <property type="taxonomic scope" value="Eukaryota"/>
</dbReference>
<dbReference type="GeneTree" id="ENSGT00950000182989"/>
<dbReference type="HOGENOM" id="CLU_031953_0_0_1"/>
<dbReference type="InParanoid" id="Q93714"/>
<dbReference type="OMA" id="VRPCRYY"/>
<dbReference type="OrthoDB" id="10261637at2759"/>
<dbReference type="PhylomeDB" id="Q93714"/>
<dbReference type="Reactome" id="R-CEL-71403">
    <property type="pathway name" value="Citric acid cycle (TCA cycle)"/>
</dbReference>
<dbReference type="Reactome" id="R-CEL-9837999">
    <property type="pathway name" value="Mitochondrial protein degradation"/>
</dbReference>
<dbReference type="PRO" id="PR:Q93714"/>
<dbReference type="Proteomes" id="UP000001940">
    <property type="component" value="Chromosome I"/>
</dbReference>
<dbReference type="Bgee" id="WBGene00009664">
    <property type="expression patterns" value="Expressed in germ line (C elegans) and 4 other cell types or tissues"/>
</dbReference>
<dbReference type="GO" id="GO:0005739">
    <property type="term" value="C:mitochondrion"/>
    <property type="evidence" value="ECO:0007005"/>
    <property type="project" value="WormBase"/>
</dbReference>
<dbReference type="GO" id="GO:0004449">
    <property type="term" value="F:isocitrate dehydrogenase (NAD+) activity"/>
    <property type="evidence" value="ECO:0000318"/>
    <property type="project" value="GO_Central"/>
</dbReference>
<dbReference type="GO" id="GO:0000287">
    <property type="term" value="F:magnesium ion binding"/>
    <property type="evidence" value="ECO:0007669"/>
    <property type="project" value="InterPro"/>
</dbReference>
<dbReference type="GO" id="GO:0051287">
    <property type="term" value="F:NAD binding"/>
    <property type="evidence" value="ECO:0007669"/>
    <property type="project" value="InterPro"/>
</dbReference>
<dbReference type="GO" id="GO:0006102">
    <property type="term" value="P:isocitrate metabolic process"/>
    <property type="evidence" value="ECO:0000318"/>
    <property type="project" value="GO_Central"/>
</dbReference>
<dbReference type="GO" id="GO:0006457">
    <property type="term" value="P:protein folding"/>
    <property type="evidence" value="ECO:0000315"/>
    <property type="project" value="WormBase"/>
</dbReference>
<dbReference type="GO" id="GO:0006099">
    <property type="term" value="P:tricarboxylic acid cycle"/>
    <property type="evidence" value="ECO:0000318"/>
    <property type="project" value="GO_Central"/>
</dbReference>
<dbReference type="FunFam" id="3.40.718.10:FF:000003">
    <property type="entry name" value="Isocitrate dehydrogenase [NAD] subunit, mitochondrial"/>
    <property type="match status" value="1"/>
</dbReference>
<dbReference type="Gene3D" id="3.40.718.10">
    <property type="entry name" value="Isopropylmalate Dehydrogenase"/>
    <property type="match status" value="1"/>
</dbReference>
<dbReference type="InterPro" id="IPR019818">
    <property type="entry name" value="IsoCit/isopropylmalate_DH_CS"/>
</dbReference>
<dbReference type="InterPro" id="IPR004434">
    <property type="entry name" value="Isocitrate_DH_NAD"/>
</dbReference>
<dbReference type="InterPro" id="IPR024084">
    <property type="entry name" value="IsoPropMal-DH-like_dom"/>
</dbReference>
<dbReference type="NCBIfam" id="TIGR00175">
    <property type="entry name" value="mito_nad_idh"/>
    <property type="match status" value="1"/>
</dbReference>
<dbReference type="PANTHER" id="PTHR11835">
    <property type="entry name" value="DECARBOXYLATING DEHYDROGENASES-ISOCITRATE, ISOPROPYLMALATE, TARTRATE"/>
    <property type="match status" value="1"/>
</dbReference>
<dbReference type="PANTHER" id="PTHR11835:SF34">
    <property type="entry name" value="ISOCITRATE DEHYDROGENASE [NAD] SUBUNIT ALPHA, MITOCHONDRIAL"/>
    <property type="match status" value="1"/>
</dbReference>
<dbReference type="Pfam" id="PF00180">
    <property type="entry name" value="Iso_dh"/>
    <property type="match status" value="1"/>
</dbReference>
<dbReference type="SMART" id="SM01329">
    <property type="entry name" value="Iso_dh"/>
    <property type="match status" value="1"/>
</dbReference>
<dbReference type="SUPFAM" id="SSF53659">
    <property type="entry name" value="Isocitrate/Isopropylmalate dehydrogenase-like"/>
    <property type="match status" value="1"/>
</dbReference>
<dbReference type="PROSITE" id="PS00470">
    <property type="entry name" value="IDH_IMDH"/>
    <property type="match status" value="1"/>
</dbReference>
<organism>
    <name type="scientific">Caenorhabditis elegans</name>
    <dbReference type="NCBI Taxonomy" id="6239"/>
    <lineage>
        <taxon>Eukaryota</taxon>
        <taxon>Metazoa</taxon>
        <taxon>Ecdysozoa</taxon>
        <taxon>Nematoda</taxon>
        <taxon>Chromadorea</taxon>
        <taxon>Rhabditida</taxon>
        <taxon>Rhabditina</taxon>
        <taxon>Rhabditomorpha</taxon>
        <taxon>Rhabditoidea</taxon>
        <taxon>Rhabditidae</taxon>
        <taxon>Peloderinae</taxon>
        <taxon>Caenorhabditis</taxon>
    </lineage>
</organism>
<feature type="transit peptide" description="Mitochondrion" evidence="3">
    <location>
        <begin position="1"/>
        <end status="unknown"/>
    </location>
</feature>
<feature type="chain" id="PRO_0000014441" description="Probable isocitrate dehydrogenase [NAD] subunit alpha, mitochondrial">
    <location>
        <begin status="unknown"/>
        <end position="358"/>
    </location>
</feature>
<feature type="binding site" evidence="1">
    <location>
        <position position="108"/>
    </location>
    <ligand>
        <name>substrate</name>
    </ligand>
</feature>
<feature type="binding site" evidence="1">
    <location>
        <position position="118"/>
    </location>
    <ligand>
        <name>substrate</name>
    </ligand>
</feature>
<feature type="binding site" evidence="1">
    <location>
        <position position="139"/>
    </location>
    <ligand>
        <name>substrate</name>
    </ligand>
</feature>
<feature type="binding site" evidence="2">
    <location>
        <position position="226"/>
    </location>
    <ligand>
        <name>Mg(2+)</name>
        <dbReference type="ChEBI" id="CHEBI:18420"/>
    </ligand>
</feature>
<feature type="binding site" evidence="1">
    <location>
        <position position="226"/>
    </location>
    <ligand>
        <name>substrate</name>
    </ligand>
</feature>
<feature type="binding site" evidence="2">
    <location>
        <position position="250"/>
    </location>
    <ligand>
        <name>Mg(2+)</name>
        <dbReference type="ChEBI" id="CHEBI:18420"/>
    </ligand>
</feature>
<feature type="binding site" evidence="2">
    <location>
        <position position="254"/>
    </location>
    <ligand>
        <name>Mg(2+)</name>
        <dbReference type="ChEBI" id="CHEBI:18420"/>
    </ligand>
</feature>
<feature type="site" description="Critical for catalysis" evidence="1">
    <location>
        <position position="146"/>
    </location>
</feature>
<feature type="site" description="Critical for catalysis" evidence="1">
    <location>
        <position position="193"/>
    </location>
</feature>
<reference key="1">
    <citation type="journal article" date="1998" name="Science">
        <title>Genome sequence of the nematode C. elegans: a platform for investigating biology.</title>
        <authorList>
            <consortium name="The C. elegans sequencing consortium"/>
        </authorList>
    </citation>
    <scope>NUCLEOTIDE SEQUENCE [LARGE SCALE GENOMIC DNA]</scope>
    <source>
        <strain>Bristol N2</strain>
    </source>
</reference>
<reference evidence="5" key="2">
    <citation type="journal article" date="2022" name="Cell Rep.">
        <title>NHR-80 senses the mitochondrial UPR to rewire citrate metabolism for lipid accumulation in Caenorhabditis elegans.</title>
        <authorList>
            <person name="Yang R."/>
            <person name="Li Y."/>
            <person name="Wang Y."/>
            <person name="Zhang J."/>
            <person name="Fan Q."/>
            <person name="Tan J."/>
            <person name="Li W."/>
            <person name="Zou X."/>
            <person name="Liang B."/>
        </authorList>
    </citation>
    <scope>DISRUPTION PHENOTYPE</scope>
</reference>
<gene>
    <name type="primary">idha-1</name>
    <name type="ORF">F43G9.1</name>
</gene>
<evidence type="ECO:0000250" key="1"/>
<evidence type="ECO:0000250" key="2">
    <source>
        <dbReference type="UniProtKB" id="P50213"/>
    </source>
</evidence>
<evidence type="ECO:0000255" key="3"/>
<evidence type="ECO:0000269" key="4">
    <source>
    </source>
</evidence>
<evidence type="ECO:0000305" key="5"/>
<name>IDH3A_CAEEL</name>
<keyword id="KW-0460">Magnesium</keyword>
<keyword id="KW-0464">Manganese</keyword>
<keyword id="KW-0479">Metal-binding</keyword>
<keyword id="KW-0496">Mitochondrion</keyword>
<keyword id="KW-0520">NAD</keyword>
<keyword id="KW-0560">Oxidoreductase</keyword>
<keyword id="KW-1185">Reference proteome</keyword>
<keyword id="KW-0809">Transit peptide</keyword>
<keyword id="KW-0816">Tricarboxylic acid cycle</keyword>
<accession>Q93714</accession>
<proteinExistence type="inferred from homology"/>
<sequence>MLGKCIKKASSTVGQSIRYSSGDVRRVTLIPGDGIGPEISASVQKIFEAADAPIAWDPVDVTPVKGRDGVFRIPSRCIELMHANKVGLKGPLETPIGKGHRSLNLAVRKEFSLYANVRPCRSLEGHKTLYDNVDVVTIRENTEGEYSGIEHEIVPGVVQSIKLITETASRNVASFAFEYARQNGRKVVTAVHKANIMRQSDGLFLSICREQAALYPDIKFKEAYLDTVCLNMVQDPSQYDVLVMPNLYGDILSDLCAGLVGGLGVTPSGNIGKGAAVFESVHGTAPDIAGQDKANPTALLLSAVMMLRYMNLPQHAARIEKAVFDAIADGRAKTGDLGGTGTCSSFTADVCARVKDLE</sequence>